<dbReference type="EMBL" id="AY028626">
    <property type="protein sequence ID" value="AAK27261.1"/>
    <property type="molecule type" value="mRNA"/>
</dbReference>
<dbReference type="SMR" id="Q98SJ5"/>
<dbReference type="FunCoup" id="Q98SJ5">
    <property type="interactions" value="965"/>
</dbReference>
<dbReference type="STRING" id="7955.ENSDARP00000033085"/>
<dbReference type="PaxDb" id="7955-ENSDARP00000033085"/>
<dbReference type="AGR" id="ZFIN:ZDB-GENE-020829-1"/>
<dbReference type="ZFIN" id="ZDB-GENE-020829-1">
    <property type="gene designation" value="sim1a"/>
</dbReference>
<dbReference type="eggNOG" id="KOG3559">
    <property type="taxonomic scope" value="Eukaryota"/>
</dbReference>
<dbReference type="InParanoid" id="Q98SJ5"/>
<dbReference type="PhylomeDB" id="Q98SJ5"/>
<dbReference type="PRO" id="PR:Q98SJ5"/>
<dbReference type="Proteomes" id="UP000000437">
    <property type="component" value="Unplaced"/>
</dbReference>
<dbReference type="GO" id="GO:0005634">
    <property type="term" value="C:nucleus"/>
    <property type="evidence" value="ECO:0007669"/>
    <property type="project" value="UniProtKB-SubCell"/>
</dbReference>
<dbReference type="GO" id="GO:0000981">
    <property type="term" value="F:DNA-binding transcription factor activity, RNA polymerase II-specific"/>
    <property type="evidence" value="ECO:0000318"/>
    <property type="project" value="GO_Central"/>
</dbReference>
<dbReference type="GO" id="GO:0046983">
    <property type="term" value="F:protein dimerization activity"/>
    <property type="evidence" value="ECO:0007669"/>
    <property type="project" value="InterPro"/>
</dbReference>
<dbReference type="GO" id="GO:0000977">
    <property type="term" value="F:RNA polymerase II transcription regulatory region sequence-specific DNA binding"/>
    <property type="evidence" value="ECO:0000318"/>
    <property type="project" value="GO_Central"/>
</dbReference>
<dbReference type="GO" id="GO:0007411">
    <property type="term" value="P:axon guidance"/>
    <property type="evidence" value="ECO:0000315"/>
    <property type="project" value="ZFIN"/>
</dbReference>
<dbReference type="GO" id="GO:0021536">
    <property type="term" value="P:diencephalon development"/>
    <property type="evidence" value="ECO:0000315"/>
    <property type="project" value="ZFIN"/>
</dbReference>
<dbReference type="GO" id="GO:0071542">
    <property type="term" value="P:dopaminergic neuron differentiation"/>
    <property type="evidence" value="ECO:0000315"/>
    <property type="project" value="ZFIN"/>
</dbReference>
<dbReference type="GO" id="GO:0021979">
    <property type="term" value="P:hypothalamus cell differentiation"/>
    <property type="evidence" value="ECO:0000315"/>
    <property type="project" value="ZFIN"/>
</dbReference>
<dbReference type="GO" id="GO:0035776">
    <property type="term" value="P:pronephric proximal tubule development"/>
    <property type="evidence" value="ECO:0000315"/>
    <property type="project" value="ZFIN"/>
</dbReference>
<dbReference type="GO" id="GO:0048793">
    <property type="term" value="P:pronephros development"/>
    <property type="evidence" value="ECO:0000315"/>
    <property type="project" value="ZFIN"/>
</dbReference>
<dbReference type="GO" id="GO:0072020">
    <property type="term" value="P:proximal straight tubule development"/>
    <property type="evidence" value="ECO:0000315"/>
    <property type="project" value="ZFIN"/>
</dbReference>
<dbReference type="GO" id="GO:0006357">
    <property type="term" value="P:regulation of transcription by RNA polymerase II"/>
    <property type="evidence" value="ECO:0000318"/>
    <property type="project" value="GO_Central"/>
</dbReference>
<dbReference type="CDD" id="cd19738">
    <property type="entry name" value="bHLH-PAS_SIM1"/>
    <property type="match status" value="1"/>
</dbReference>
<dbReference type="CDD" id="cd00130">
    <property type="entry name" value="PAS"/>
    <property type="match status" value="2"/>
</dbReference>
<dbReference type="FunFam" id="3.30.450.20:FF:000017">
    <property type="entry name" value="SIM bHLH transcription factor 2"/>
    <property type="match status" value="1"/>
</dbReference>
<dbReference type="FunFam" id="3.30.450.20:FF:000047">
    <property type="entry name" value="SIM bHLH transcription factor 2"/>
    <property type="match status" value="1"/>
</dbReference>
<dbReference type="FunFam" id="4.10.280.10:FF:000007">
    <property type="entry name" value="single-minded homolog 1 isoform X1"/>
    <property type="match status" value="1"/>
</dbReference>
<dbReference type="Gene3D" id="4.10.280.10">
    <property type="entry name" value="Helix-loop-helix DNA-binding domain"/>
    <property type="match status" value="1"/>
</dbReference>
<dbReference type="Gene3D" id="3.30.450.20">
    <property type="entry name" value="PAS domain"/>
    <property type="match status" value="2"/>
</dbReference>
<dbReference type="InterPro" id="IPR011598">
    <property type="entry name" value="bHLH_dom"/>
</dbReference>
<dbReference type="InterPro" id="IPR036638">
    <property type="entry name" value="HLH_DNA-bd_sf"/>
</dbReference>
<dbReference type="InterPro" id="IPR001610">
    <property type="entry name" value="PAC"/>
</dbReference>
<dbReference type="InterPro" id="IPR000014">
    <property type="entry name" value="PAS"/>
</dbReference>
<dbReference type="InterPro" id="IPR035965">
    <property type="entry name" value="PAS-like_dom_sf"/>
</dbReference>
<dbReference type="InterPro" id="IPR013767">
    <property type="entry name" value="PAS_fold"/>
</dbReference>
<dbReference type="InterPro" id="IPR013655">
    <property type="entry name" value="PAS_fold_3"/>
</dbReference>
<dbReference type="InterPro" id="IPR010578">
    <property type="entry name" value="SIM_C"/>
</dbReference>
<dbReference type="NCBIfam" id="TIGR00229">
    <property type="entry name" value="sensory_box"/>
    <property type="match status" value="1"/>
</dbReference>
<dbReference type="PANTHER" id="PTHR23043">
    <property type="entry name" value="HYPOXIA-INDUCIBLE FACTOR 1 ALPHA"/>
    <property type="match status" value="1"/>
</dbReference>
<dbReference type="PANTHER" id="PTHR23043:SF22">
    <property type="entry name" value="SINGLE-MINDED HOMOLOG 1"/>
    <property type="match status" value="1"/>
</dbReference>
<dbReference type="Pfam" id="PF23171">
    <property type="entry name" value="bHLH_HIF1A"/>
    <property type="match status" value="1"/>
</dbReference>
<dbReference type="Pfam" id="PF00989">
    <property type="entry name" value="PAS"/>
    <property type="match status" value="1"/>
</dbReference>
<dbReference type="Pfam" id="PF08447">
    <property type="entry name" value="PAS_3"/>
    <property type="match status" value="1"/>
</dbReference>
<dbReference type="Pfam" id="PF06621">
    <property type="entry name" value="SIM_C"/>
    <property type="match status" value="1"/>
</dbReference>
<dbReference type="SMART" id="SM00086">
    <property type="entry name" value="PAC"/>
    <property type="match status" value="1"/>
</dbReference>
<dbReference type="SMART" id="SM00091">
    <property type="entry name" value="PAS"/>
    <property type="match status" value="2"/>
</dbReference>
<dbReference type="SUPFAM" id="SSF47459">
    <property type="entry name" value="HLH, helix-loop-helix DNA-binding domain"/>
    <property type="match status" value="1"/>
</dbReference>
<dbReference type="SUPFAM" id="SSF55785">
    <property type="entry name" value="PYP-like sensor domain (PAS domain)"/>
    <property type="match status" value="2"/>
</dbReference>
<dbReference type="PROSITE" id="PS50888">
    <property type="entry name" value="BHLH"/>
    <property type="match status" value="1"/>
</dbReference>
<dbReference type="PROSITE" id="PS50112">
    <property type="entry name" value="PAS"/>
    <property type="match status" value="2"/>
</dbReference>
<dbReference type="PROSITE" id="PS51302">
    <property type="entry name" value="SIM_C"/>
    <property type="match status" value="1"/>
</dbReference>
<evidence type="ECO:0000250" key="1"/>
<evidence type="ECO:0000255" key="2">
    <source>
        <dbReference type="PROSITE-ProRule" id="PRU00140"/>
    </source>
</evidence>
<evidence type="ECO:0000255" key="3">
    <source>
        <dbReference type="PROSITE-ProRule" id="PRU00632"/>
    </source>
</evidence>
<evidence type="ECO:0000255" key="4">
    <source>
        <dbReference type="PROSITE-ProRule" id="PRU00981"/>
    </source>
</evidence>
<evidence type="ECO:0000256" key="5">
    <source>
        <dbReference type="SAM" id="MobiDB-lite"/>
    </source>
</evidence>
<evidence type="ECO:0000269" key="6">
    <source>
    </source>
</evidence>
<evidence type="ECO:0000269" key="7">
    <source>
    </source>
</evidence>
<evidence type="ECO:0000269" key="8">
    <source>
    </source>
</evidence>
<gene>
    <name type="primary">sim1a</name>
    <name type="synonym">sim1</name>
</gene>
<organism>
    <name type="scientific">Danio rerio</name>
    <name type="common">Zebrafish</name>
    <name type="synonym">Brachydanio rerio</name>
    <dbReference type="NCBI Taxonomy" id="7955"/>
    <lineage>
        <taxon>Eukaryota</taxon>
        <taxon>Metazoa</taxon>
        <taxon>Chordata</taxon>
        <taxon>Craniata</taxon>
        <taxon>Vertebrata</taxon>
        <taxon>Euteleostomi</taxon>
        <taxon>Actinopterygii</taxon>
        <taxon>Neopterygii</taxon>
        <taxon>Teleostei</taxon>
        <taxon>Ostariophysi</taxon>
        <taxon>Cypriniformes</taxon>
        <taxon>Danionidae</taxon>
        <taxon>Danioninae</taxon>
        <taxon>Danio</taxon>
    </lineage>
</organism>
<comment type="function">
    <text evidence="7 8">Transcriptional factor that may have pleiotropic effects during embryogenesis and in the adult.</text>
</comment>
<comment type="subunit">
    <text evidence="1">Efficient DNA binding requires dimerization with another bHLH protein. Heterodimer of sim1a and arnt (By similarity).</text>
</comment>
<comment type="subcellular location">
    <subcellularLocation>
        <location evidence="3 4">Nucleus</location>
    </subcellularLocation>
</comment>
<comment type="tissue specificity">
    <text evidence="7 8">Expressed in embryonic forebrain at the eleven somite stage. Detected in brain throughout embryonic development.</text>
</comment>
<comment type="developmental stage">
    <text evidence="6 7">First detected at the two somite stage. Detected in intermediate mesoderm.</text>
</comment>
<protein>
    <recommendedName>
        <fullName>Single-minded homolog 1-A</fullName>
    </recommendedName>
</protein>
<sequence>MKEKSKNAGRTRREKENSEFYELAKLLPLPSAITSQSDKASIIRLTTSYLKMRIVFPEGLGESWGHVSRTTSLENVGRELGSHLLQTLDGFIFVVAPDGKILYISETASVHLGLSQEELTGNSIYEYIHPADHDEMTAVLTAHQPYHSHFVHEYEMERSFFLRMKCVLAKANAGLTCGGYKVIHCSGYLKIRQYSLDMSPFDGCYQNVGLVAVGHSLPPSAVTEIKLHSNMFMFRASLDMKLIFLDSRVAELTGYEPQDLIEKTLYHHVHSCDTFHLRCAHHLLLVKGQVTTKYYRFLAKQGGWVWVQSYATIVHNSRSSRPHCIVSVNYVLTDTEYKGLQLSLDQAASTKPSFTYNSPSNPVTENRRVGKSRVSRTKTKTRLSPYSQYPGFPTDRSESDQDSPWGGSPLTDSASPQLLEQCEGIESSCVYRQFSDPRSLCYGLPLTEDHHTSNELYSHPHSESCERGCCKAGRYFLGTPQPGREAWWGAARSVLPLPKSSPENGDSFEGVSPHIASIHSLQVRGHWDEDSAVSSAPDGGSASDSGDRFRADQCRSSPQEPSKIETLIRATQQMIKEEESRLQLRKLPTDVPLEPTNSLAKSFHSTDFPQSAMQSVVCRGPAQVISPAPSPVPLSRLSSPLPDRLSKGKDFLQNELSSSQLPLTGTCAVSPTPALYSLHPRQYLEKHAAYSLTSYALEHLYEADTFRGYSLGCSGSSHYDMTTHLRKAEQAPGHKGTSVIITNGS</sequence>
<proteinExistence type="evidence at transcript level"/>
<name>SIM1A_DANRE</name>
<accession>Q98SJ5</accession>
<keyword id="KW-0217">Developmental protein</keyword>
<keyword id="KW-0221">Differentiation</keyword>
<keyword id="KW-0238">DNA-binding</keyword>
<keyword id="KW-0524">Neurogenesis</keyword>
<keyword id="KW-0539">Nucleus</keyword>
<keyword id="KW-1185">Reference proteome</keyword>
<keyword id="KW-0677">Repeat</keyword>
<keyword id="KW-0804">Transcription</keyword>
<keyword id="KW-0805">Transcription regulation</keyword>
<reference key="1">
    <citation type="journal article" date="2001" name="Development">
        <title>Pre-pattern in the pronephric kidney field of zebrafish.</title>
        <authorList>
            <person name="Serluca F.C."/>
            <person name="Fishman M.C."/>
        </authorList>
    </citation>
    <scope>NUCLEOTIDE SEQUENCE [MRNA]</scope>
    <scope>DEVELOPMENTAL STAGE</scope>
    <source>
        <tissue>Embryo</tissue>
    </source>
</reference>
<reference key="2">
    <citation type="journal article" date="2006" name="Dev. Dyn.">
        <title>The zebrafish bHLH PAS transcriptional regulator, single-minded 1 (sim1), is required for isotocin cell development.</title>
        <authorList>
            <person name="Eaton J.L."/>
            <person name="Glasgow E."/>
        </authorList>
    </citation>
    <scope>FUNCTION</scope>
    <scope>DEVELOPMENTAL STAGE</scope>
    <scope>TISSUE SPECIFICITY</scope>
</reference>
<reference key="3">
    <citation type="journal article" date="2008" name="Dev. Dyn.">
        <title>Ontogeny of vasotocin-expressing cells in zebrafish: selective requirement for the transcriptional regulators orthopedia and single-minded 1 in the preoptic area.</title>
        <authorList>
            <person name="Eaton J.L."/>
            <person name="Holmqvist B."/>
            <person name="Glasgow E."/>
        </authorList>
    </citation>
    <scope>FUNCTION</scope>
    <scope>TISSUE SPECIFICITY</scope>
</reference>
<feature type="chain" id="PRO_0000343424" description="Single-minded homolog 1-A">
    <location>
        <begin position="1"/>
        <end position="745"/>
    </location>
</feature>
<feature type="domain" description="bHLH" evidence="4">
    <location>
        <begin position="1"/>
        <end position="53"/>
    </location>
</feature>
<feature type="domain" description="PAS 1" evidence="2">
    <location>
        <begin position="77"/>
        <end position="147"/>
    </location>
</feature>
<feature type="domain" description="PAS 2" evidence="2">
    <location>
        <begin position="218"/>
        <end position="288"/>
    </location>
</feature>
<feature type="domain" description="Single-minded C-terminal" evidence="3">
    <location>
        <begin position="336"/>
        <end position="745"/>
    </location>
</feature>
<feature type="region of interest" description="Disordered" evidence="5">
    <location>
        <begin position="350"/>
        <end position="413"/>
    </location>
</feature>
<feature type="region of interest" description="Disordered" evidence="5">
    <location>
        <begin position="529"/>
        <end position="563"/>
    </location>
</feature>
<feature type="short sequence motif" description="Nuclear localization signal" evidence="1">
    <location>
        <begin position="368"/>
        <end position="387"/>
    </location>
</feature>
<feature type="compositionally biased region" description="Polar residues" evidence="5">
    <location>
        <begin position="350"/>
        <end position="364"/>
    </location>
</feature>
<feature type="compositionally biased region" description="Basic residues" evidence="5">
    <location>
        <begin position="369"/>
        <end position="381"/>
    </location>
</feature>
<feature type="compositionally biased region" description="Low complexity" evidence="5">
    <location>
        <begin position="532"/>
        <end position="544"/>
    </location>
</feature>